<organism>
    <name type="scientific">Haemophilus influenzae (strain ATCC 51907 / DSM 11121 / KW20 / Rd)</name>
    <dbReference type="NCBI Taxonomy" id="71421"/>
    <lineage>
        <taxon>Bacteria</taxon>
        <taxon>Pseudomonadati</taxon>
        <taxon>Pseudomonadota</taxon>
        <taxon>Gammaproteobacteria</taxon>
        <taxon>Pasteurellales</taxon>
        <taxon>Pasteurellaceae</taxon>
        <taxon>Haemophilus</taxon>
    </lineage>
</organism>
<accession>P44012</accession>
<reference key="1">
    <citation type="journal article" date="1995" name="Science">
        <title>Whole-genome random sequencing and assembly of Haemophilus influenzae Rd.</title>
        <authorList>
            <person name="Fleischmann R.D."/>
            <person name="Adams M.D."/>
            <person name="White O."/>
            <person name="Clayton R.A."/>
            <person name="Kirkness E.F."/>
            <person name="Kerlavage A.R."/>
            <person name="Bult C.J."/>
            <person name="Tomb J.-F."/>
            <person name="Dougherty B.A."/>
            <person name="Merrick J.M."/>
            <person name="McKenney K."/>
            <person name="Sutton G.G."/>
            <person name="FitzHugh W."/>
            <person name="Fields C.A."/>
            <person name="Gocayne J.D."/>
            <person name="Scott J.D."/>
            <person name="Shirley R."/>
            <person name="Liu L.-I."/>
            <person name="Glodek A."/>
            <person name="Kelley J.M."/>
            <person name="Weidman J.F."/>
            <person name="Phillips C.A."/>
            <person name="Spriggs T."/>
            <person name="Hedblom E."/>
            <person name="Cotton M.D."/>
            <person name="Utterback T.R."/>
            <person name="Hanna M.C."/>
            <person name="Nguyen D.T."/>
            <person name="Saudek D.M."/>
            <person name="Brandon R.C."/>
            <person name="Fine L.D."/>
            <person name="Fritchman J.L."/>
            <person name="Fuhrmann J.L."/>
            <person name="Geoghagen N.S.M."/>
            <person name="Gnehm C.L."/>
            <person name="McDonald L.A."/>
            <person name="Small K.V."/>
            <person name="Fraser C.M."/>
            <person name="Smith H.O."/>
            <person name="Venter J.C."/>
        </authorList>
    </citation>
    <scope>NUCLEOTIDE SEQUENCE [LARGE SCALE GENOMIC DNA]</scope>
    <source>
        <strain>ATCC 51907 / DSM 11121 / KW20 / Rd</strain>
    </source>
</reference>
<feature type="signal peptide" evidence="2">
    <location>
        <begin position="1"/>
        <end position="23"/>
    </location>
</feature>
<feature type="chain" id="PRO_0000030963" description="Probable ribonuclease HI_0526">
    <location>
        <begin position="24"/>
        <end position="272"/>
    </location>
</feature>
<feature type="active site" evidence="1">
    <location>
        <position position="148"/>
    </location>
</feature>
<feature type="active site" evidence="1">
    <location>
        <position position="195"/>
    </location>
</feature>
<feature type="active site" evidence="1">
    <location>
        <position position="199"/>
    </location>
</feature>
<protein>
    <recommendedName>
        <fullName>Probable ribonuclease HI_0526</fullName>
    </recommendedName>
</protein>
<dbReference type="EMBL" id="L42023">
    <property type="protein sequence ID" value="AAC22192.1"/>
    <property type="molecule type" value="Genomic_DNA"/>
</dbReference>
<dbReference type="PIR" id="C64009">
    <property type="entry name" value="C64009"/>
</dbReference>
<dbReference type="RefSeq" id="NP_438684.1">
    <property type="nucleotide sequence ID" value="NC_000907.1"/>
</dbReference>
<dbReference type="SMR" id="P44012"/>
<dbReference type="STRING" id="71421.HI_0526"/>
<dbReference type="EnsemblBacteria" id="AAC22192">
    <property type="protein sequence ID" value="AAC22192"/>
    <property type="gene ID" value="HI_0526"/>
</dbReference>
<dbReference type="KEGG" id="hin:HI_0526"/>
<dbReference type="PATRIC" id="fig|71421.8.peg.545"/>
<dbReference type="eggNOG" id="COG3719">
    <property type="taxonomic scope" value="Bacteria"/>
</dbReference>
<dbReference type="HOGENOM" id="CLU_069375_0_0_6"/>
<dbReference type="OrthoDB" id="4720638at2"/>
<dbReference type="PhylomeDB" id="P44012"/>
<dbReference type="BioCyc" id="HINF71421:G1GJ1-539-MONOMER"/>
<dbReference type="Proteomes" id="UP000000579">
    <property type="component" value="Chromosome"/>
</dbReference>
<dbReference type="GO" id="GO:0033897">
    <property type="term" value="F:ribonuclease T2 activity"/>
    <property type="evidence" value="ECO:0007669"/>
    <property type="project" value="InterPro"/>
</dbReference>
<dbReference type="GO" id="GO:0003723">
    <property type="term" value="F:RNA binding"/>
    <property type="evidence" value="ECO:0007669"/>
    <property type="project" value="InterPro"/>
</dbReference>
<dbReference type="GO" id="GO:0006401">
    <property type="term" value="P:RNA catabolic process"/>
    <property type="evidence" value="ECO:0000318"/>
    <property type="project" value="GO_Central"/>
</dbReference>
<dbReference type="Gene3D" id="3.90.730.10">
    <property type="entry name" value="Ribonuclease T2-like"/>
    <property type="match status" value="1"/>
</dbReference>
<dbReference type="InterPro" id="IPR001568">
    <property type="entry name" value="RNase_T2-like"/>
</dbReference>
<dbReference type="InterPro" id="IPR036430">
    <property type="entry name" value="RNase_T2-like_sf"/>
</dbReference>
<dbReference type="InterPro" id="IPR018188">
    <property type="entry name" value="RNase_T2_His_AS_1"/>
</dbReference>
<dbReference type="InterPro" id="IPR033130">
    <property type="entry name" value="RNase_T2_His_AS_2"/>
</dbReference>
<dbReference type="PANTHER" id="PTHR11240">
    <property type="entry name" value="RIBONUCLEASE T2"/>
    <property type="match status" value="1"/>
</dbReference>
<dbReference type="PANTHER" id="PTHR11240:SF22">
    <property type="entry name" value="RIBONUCLEASE T2"/>
    <property type="match status" value="1"/>
</dbReference>
<dbReference type="Pfam" id="PF00445">
    <property type="entry name" value="Ribonuclease_T2"/>
    <property type="match status" value="1"/>
</dbReference>
<dbReference type="SUPFAM" id="SSF55895">
    <property type="entry name" value="Ribonuclease Rh-like"/>
    <property type="match status" value="1"/>
</dbReference>
<dbReference type="PROSITE" id="PS00530">
    <property type="entry name" value="RNASE_T2_1"/>
    <property type="match status" value="1"/>
</dbReference>
<dbReference type="PROSITE" id="PS00531">
    <property type="entry name" value="RNASE_T2_2"/>
    <property type="match status" value="1"/>
</dbReference>
<keyword id="KW-0255">Endonuclease</keyword>
<keyword id="KW-0378">Hydrolase</keyword>
<keyword id="KW-0540">Nuclease</keyword>
<keyword id="KW-1185">Reference proteome</keyword>
<keyword id="KW-0732">Signal</keyword>
<proteinExistence type="inferred from homology"/>
<comment type="similarity">
    <text evidence="3">Belongs to the RNase T2 family.</text>
</comment>
<evidence type="ECO:0000250" key="1"/>
<evidence type="ECO:0000255" key="2"/>
<evidence type="ECO:0000305" key="3"/>
<gene>
    <name type="ordered locus">HI_0526</name>
</gene>
<name>RN26_HAEIN</name>
<sequence>MKKLTSILSLIVLVILAIWQYFTDTTKTKHQSSSPVIEQTKQTKVSEPKFEPKFEPKFEPKFEPQFETKRTDIEKSAVKNPDVFANYDVIMRNDHIGQNAKAPVDYYMLALSWSPGFCDIQREKYGDQLPYSSQYQCGNNRTFGWVVHGLWPQNANARAVSDHPRFCKGDLPALPKGLLAQYLAISPGEKLLQGEWEKHGSCAFDSAQQYFAKEQELFNALKLPNQKLSRDELFGWMKQHNPQLKNAYLRASRNELFICYDKKWQVMNCQSK</sequence>